<gene>
    <name type="primary">Tpra1</name>
    <name type="synonym">Gpr175</name>
    <name type="synonym">Tpra40</name>
</gene>
<sequence>MASLQEANGSTAWPPPTASNISEPHQCLLLLYEDIGSSRVRYWDLLLLIPNVLFFIFLLWKLPLARAKIRVTSSPIFITFYILVFVVALVGIARAVVSMTVSASDAATVADKILWEITRFFLLAIELSVIILGLAFGHLESKSSIKRVLAITTVLSLAYSVTQGTLEILYPDSHLSAEDFNIYGHGGRQFWLVSSCFFFLVYSLVVILPKTPLKERVSLPSRRSFYVYAGILATLNLLQGLGSALLCANIIVGLCCVDATTFLYFSFFAPLIYVAFLRGFFGSEPKILFSYKCQVDEAEEPDMHLPQPYAVARREGIESAGPACASAANYSSTQFDSAGVAYLDDIASMPCHTGSINSTDSERWKAINA</sequence>
<reference key="1">
    <citation type="journal article" date="1999" name="Endocrinology">
        <title>Differential expression of a novel seven transmembrane domain protein in epididymal fat from aged and diabetic mice.</title>
        <authorList>
            <person name="Yang H."/>
            <person name="Egan J.M."/>
            <person name="Rodgers B.D."/>
            <person name="Bernier M."/>
            <person name="Montrose-Rafizadeh C."/>
        </authorList>
    </citation>
    <scope>NUCLEOTIDE SEQUENCE [MRNA]</scope>
    <scope>INDUCTION</scope>
    <scope>TISSUE SPECIFICITY</scope>
    <source>
        <tissue>Adipocyte</tissue>
    </source>
</reference>
<reference key="2">
    <citation type="journal article" date="2005" name="Science">
        <title>The transcriptional landscape of the mammalian genome.</title>
        <authorList>
            <person name="Carninci P."/>
            <person name="Kasukawa T."/>
            <person name="Katayama S."/>
            <person name="Gough J."/>
            <person name="Frith M.C."/>
            <person name="Maeda N."/>
            <person name="Oyama R."/>
            <person name="Ravasi T."/>
            <person name="Lenhard B."/>
            <person name="Wells C."/>
            <person name="Kodzius R."/>
            <person name="Shimokawa K."/>
            <person name="Bajic V.B."/>
            <person name="Brenner S.E."/>
            <person name="Batalov S."/>
            <person name="Forrest A.R."/>
            <person name="Zavolan M."/>
            <person name="Davis M.J."/>
            <person name="Wilming L.G."/>
            <person name="Aidinis V."/>
            <person name="Allen J.E."/>
            <person name="Ambesi-Impiombato A."/>
            <person name="Apweiler R."/>
            <person name="Aturaliya R.N."/>
            <person name="Bailey T.L."/>
            <person name="Bansal M."/>
            <person name="Baxter L."/>
            <person name="Beisel K.W."/>
            <person name="Bersano T."/>
            <person name="Bono H."/>
            <person name="Chalk A.M."/>
            <person name="Chiu K.P."/>
            <person name="Choudhary V."/>
            <person name="Christoffels A."/>
            <person name="Clutterbuck D.R."/>
            <person name="Crowe M.L."/>
            <person name="Dalla E."/>
            <person name="Dalrymple B.P."/>
            <person name="de Bono B."/>
            <person name="Della Gatta G."/>
            <person name="di Bernardo D."/>
            <person name="Down T."/>
            <person name="Engstrom P."/>
            <person name="Fagiolini M."/>
            <person name="Faulkner G."/>
            <person name="Fletcher C.F."/>
            <person name="Fukushima T."/>
            <person name="Furuno M."/>
            <person name="Futaki S."/>
            <person name="Gariboldi M."/>
            <person name="Georgii-Hemming P."/>
            <person name="Gingeras T.R."/>
            <person name="Gojobori T."/>
            <person name="Green R.E."/>
            <person name="Gustincich S."/>
            <person name="Harbers M."/>
            <person name="Hayashi Y."/>
            <person name="Hensch T.K."/>
            <person name="Hirokawa N."/>
            <person name="Hill D."/>
            <person name="Huminiecki L."/>
            <person name="Iacono M."/>
            <person name="Ikeo K."/>
            <person name="Iwama A."/>
            <person name="Ishikawa T."/>
            <person name="Jakt M."/>
            <person name="Kanapin A."/>
            <person name="Katoh M."/>
            <person name="Kawasawa Y."/>
            <person name="Kelso J."/>
            <person name="Kitamura H."/>
            <person name="Kitano H."/>
            <person name="Kollias G."/>
            <person name="Krishnan S.P."/>
            <person name="Kruger A."/>
            <person name="Kummerfeld S.K."/>
            <person name="Kurochkin I.V."/>
            <person name="Lareau L.F."/>
            <person name="Lazarevic D."/>
            <person name="Lipovich L."/>
            <person name="Liu J."/>
            <person name="Liuni S."/>
            <person name="McWilliam S."/>
            <person name="Madan Babu M."/>
            <person name="Madera M."/>
            <person name="Marchionni L."/>
            <person name="Matsuda H."/>
            <person name="Matsuzawa S."/>
            <person name="Miki H."/>
            <person name="Mignone F."/>
            <person name="Miyake S."/>
            <person name="Morris K."/>
            <person name="Mottagui-Tabar S."/>
            <person name="Mulder N."/>
            <person name="Nakano N."/>
            <person name="Nakauchi H."/>
            <person name="Ng P."/>
            <person name="Nilsson R."/>
            <person name="Nishiguchi S."/>
            <person name="Nishikawa S."/>
            <person name="Nori F."/>
            <person name="Ohara O."/>
            <person name="Okazaki Y."/>
            <person name="Orlando V."/>
            <person name="Pang K.C."/>
            <person name="Pavan W.J."/>
            <person name="Pavesi G."/>
            <person name="Pesole G."/>
            <person name="Petrovsky N."/>
            <person name="Piazza S."/>
            <person name="Reed J."/>
            <person name="Reid J.F."/>
            <person name="Ring B.Z."/>
            <person name="Ringwald M."/>
            <person name="Rost B."/>
            <person name="Ruan Y."/>
            <person name="Salzberg S.L."/>
            <person name="Sandelin A."/>
            <person name="Schneider C."/>
            <person name="Schoenbach C."/>
            <person name="Sekiguchi K."/>
            <person name="Semple C.A."/>
            <person name="Seno S."/>
            <person name="Sessa L."/>
            <person name="Sheng Y."/>
            <person name="Shibata Y."/>
            <person name="Shimada H."/>
            <person name="Shimada K."/>
            <person name="Silva D."/>
            <person name="Sinclair B."/>
            <person name="Sperling S."/>
            <person name="Stupka E."/>
            <person name="Sugiura K."/>
            <person name="Sultana R."/>
            <person name="Takenaka Y."/>
            <person name="Taki K."/>
            <person name="Tammoja K."/>
            <person name="Tan S.L."/>
            <person name="Tang S."/>
            <person name="Taylor M.S."/>
            <person name="Tegner J."/>
            <person name="Teichmann S.A."/>
            <person name="Ueda H.R."/>
            <person name="van Nimwegen E."/>
            <person name="Verardo R."/>
            <person name="Wei C.L."/>
            <person name="Yagi K."/>
            <person name="Yamanishi H."/>
            <person name="Zabarovsky E."/>
            <person name="Zhu S."/>
            <person name="Zimmer A."/>
            <person name="Hide W."/>
            <person name="Bult C."/>
            <person name="Grimmond S.M."/>
            <person name="Teasdale R.D."/>
            <person name="Liu E.T."/>
            <person name="Brusic V."/>
            <person name="Quackenbush J."/>
            <person name="Wahlestedt C."/>
            <person name="Mattick J.S."/>
            <person name="Hume D.A."/>
            <person name="Kai C."/>
            <person name="Sasaki D."/>
            <person name="Tomaru Y."/>
            <person name="Fukuda S."/>
            <person name="Kanamori-Katayama M."/>
            <person name="Suzuki M."/>
            <person name="Aoki J."/>
            <person name="Arakawa T."/>
            <person name="Iida J."/>
            <person name="Imamura K."/>
            <person name="Itoh M."/>
            <person name="Kato T."/>
            <person name="Kawaji H."/>
            <person name="Kawagashira N."/>
            <person name="Kawashima T."/>
            <person name="Kojima M."/>
            <person name="Kondo S."/>
            <person name="Konno H."/>
            <person name="Nakano K."/>
            <person name="Ninomiya N."/>
            <person name="Nishio T."/>
            <person name="Okada M."/>
            <person name="Plessy C."/>
            <person name="Shibata K."/>
            <person name="Shiraki T."/>
            <person name="Suzuki S."/>
            <person name="Tagami M."/>
            <person name="Waki K."/>
            <person name="Watahiki A."/>
            <person name="Okamura-Oho Y."/>
            <person name="Suzuki H."/>
            <person name="Kawai J."/>
            <person name="Hayashizaki Y."/>
        </authorList>
    </citation>
    <scope>NUCLEOTIDE SEQUENCE [LARGE SCALE MRNA]</scope>
    <source>
        <strain>C57BL/6J</strain>
        <strain>NOD</strain>
        <tissue>Lung</tissue>
        <tissue>Spleen</tissue>
    </source>
</reference>
<reference key="3">
    <citation type="journal article" date="2004" name="Genome Res.">
        <title>The status, quality, and expansion of the NIH full-length cDNA project: the Mammalian Gene Collection (MGC).</title>
        <authorList>
            <consortium name="The MGC Project Team"/>
        </authorList>
    </citation>
    <scope>NUCLEOTIDE SEQUENCE [LARGE SCALE MRNA]</scope>
    <source>
        <tissue>Eye</tissue>
        <tissue>Mammary gland</tissue>
    </source>
</reference>
<reference key="4">
    <citation type="journal article" date="2003" name="Proc. Natl. Acad. Sci. U.S.A.">
        <title>The G protein-coupled receptor repertoires of human and mouse.</title>
        <authorList>
            <person name="Vassilatis D.K."/>
            <person name="Hohmann J.G."/>
            <person name="Zeng H."/>
            <person name="Li F."/>
            <person name="Ranchalis J.E."/>
            <person name="Mortrud M.T."/>
            <person name="Brown A."/>
            <person name="Rodriguez S.S."/>
            <person name="Weller J.R."/>
            <person name="Wright A.C."/>
            <person name="Bergmann J.E."/>
            <person name="Gaitanaris G.A."/>
        </authorList>
    </citation>
    <scope>NUCLEOTIDE SEQUENCE [MRNA] OF 25-148</scope>
</reference>
<feature type="chain" id="PRO_0000076100" description="Transmembrane protein adipocyte-associated 1">
    <location>
        <begin position="1"/>
        <end position="369"/>
    </location>
</feature>
<feature type="transmembrane region" description="Helical; Name=1" evidence="1">
    <location>
        <begin position="45"/>
        <end position="65"/>
    </location>
</feature>
<feature type="transmembrane region" description="Helical; Name=2" evidence="1">
    <location>
        <begin position="73"/>
        <end position="93"/>
    </location>
</feature>
<feature type="transmembrane region" description="Helical; Name=3" evidence="1">
    <location>
        <begin position="120"/>
        <end position="140"/>
    </location>
</feature>
<feature type="transmembrane region" description="Helical; Name=4" evidence="1">
    <location>
        <begin position="148"/>
        <end position="168"/>
    </location>
</feature>
<feature type="transmembrane region" description="Helical; Name=5" evidence="1">
    <location>
        <begin position="189"/>
        <end position="209"/>
    </location>
</feature>
<feature type="transmembrane region" description="Helical; Name=6" evidence="1">
    <location>
        <begin position="237"/>
        <end position="257"/>
    </location>
</feature>
<feature type="transmembrane region" description="Helical; Name=7" evidence="1">
    <location>
        <begin position="262"/>
        <end position="282"/>
    </location>
</feature>
<feature type="glycosylation site" description="N-linked (GlcNAc...) asparagine" evidence="1">
    <location>
        <position position="20"/>
    </location>
</feature>
<feature type="glycosylation site" description="N-linked (GlcNAc...) asparagine" evidence="1">
    <location>
        <position position="329"/>
    </location>
</feature>
<name>TPRA1_MOUSE</name>
<comment type="subcellular location">
    <subcellularLocation>
        <location>Membrane</location>
        <topology>Multi-pass membrane protein</topology>
    </subcellularLocation>
</comment>
<comment type="tissue specificity">
    <text evidence="2">Ubiquitous, with higher levels in heart, brain, lung, liver and kidney.</text>
</comment>
<comment type="induction">
    <text evidence="2">Induced during adipocytes differentiation and in white fat from aged and diabetics mice.</text>
</comment>
<comment type="similarity">
    <text evidence="3">Belongs to the UPF0359 family.</text>
</comment>
<comment type="sequence caution" evidence="3">
    <conflict type="frameshift">
        <sequence resource="EMBL-CDS" id="AAD15788"/>
    </conflict>
</comment>
<dbReference type="EMBL" id="AF051098">
    <property type="protein sequence ID" value="AAD15788.1"/>
    <property type="status" value="ALT_FRAME"/>
    <property type="molecule type" value="mRNA"/>
</dbReference>
<dbReference type="EMBL" id="AK089317">
    <property type="protein sequence ID" value="BAC40839.1"/>
    <property type="molecule type" value="mRNA"/>
</dbReference>
<dbReference type="EMBL" id="AK164913">
    <property type="protein sequence ID" value="BAE37962.1"/>
    <property type="molecule type" value="mRNA"/>
</dbReference>
<dbReference type="EMBL" id="AK172045">
    <property type="protein sequence ID" value="BAE42796.1"/>
    <property type="molecule type" value="mRNA"/>
</dbReference>
<dbReference type="EMBL" id="BC010244">
    <property type="protein sequence ID" value="AAH10244.1"/>
    <property type="molecule type" value="mRNA"/>
</dbReference>
<dbReference type="EMBL" id="BC028977">
    <property type="protein sequence ID" value="AAH28977.1"/>
    <property type="molecule type" value="mRNA"/>
</dbReference>
<dbReference type="EMBL" id="AY255531">
    <property type="protein sequence ID" value="AAO85043.1"/>
    <property type="molecule type" value="mRNA"/>
</dbReference>
<dbReference type="CCDS" id="CCDS39555.1"/>
<dbReference type="RefSeq" id="NP_036036.2">
    <property type="nucleotide sequence ID" value="NM_011906.3"/>
</dbReference>
<dbReference type="RefSeq" id="XP_006506124.1">
    <property type="nucleotide sequence ID" value="XM_006506061.4"/>
</dbReference>
<dbReference type="RefSeq" id="XP_006506125.1">
    <property type="nucleotide sequence ID" value="XM_006506062.3"/>
</dbReference>
<dbReference type="RefSeq" id="XP_006506126.1">
    <property type="nucleotide sequence ID" value="XM_006506063.3"/>
</dbReference>
<dbReference type="RefSeq" id="XP_036021999.1">
    <property type="nucleotide sequence ID" value="XM_036166106.1"/>
</dbReference>
<dbReference type="RefSeq" id="XP_036022000.1">
    <property type="nucleotide sequence ID" value="XM_036166107.1"/>
</dbReference>
<dbReference type="FunCoup" id="Q99MU1">
    <property type="interactions" value="607"/>
</dbReference>
<dbReference type="STRING" id="10090.ENSMUSP00000063042"/>
<dbReference type="GlyCosmos" id="Q99MU1">
    <property type="glycosylation" value="2 sites, No reported glycans"/>
</dbReference>
<dbReference type="GlyGen" id="Q99MU1">
    <property type="glycosylation" value="3 sites"/>
</dbReference>
<dbReference type="PhosphoSitePlus" id="Q99MU1"/>
<dbReference type="PaxDb" id="10090-ENSMUSP00000063042"/>
<dbReference type="ProteomicsDB" id="259504"/>
<dbReference type="Antibodypedia" id="17215">
    <property type="antibodies" value="282 antibodies from 30 providers"/>
</dbReference>
<dbReference type="Ensembl" id="ENSMUST00000055022.15">
    <property type="protein sequence ID" value="ENSMUSP00000063042.9"/>
    <property type="gene ID" value="ENSMUSG00000002871.15"/>
</dbReference>
<dbReference type="Ensembl" id="ENSMUST00000203185.3">
    <property type="protein sequence ID" value="ENSMUSP00000145168.2"/>
    <property type="gene ID" value="ENSMUSG00000002871.15"/>
</dbReference>
<dbReference type="Ensembl" id="ENSMUST00000204765.3">
    <property type="protein sequence ID" value="ENSMUSP00000145050.2"/>
    <property type="gene ID" value="ENSMUSG00000002871.15"/>
</dbReference>
<dbReference type="GeneID" id="24100"/>
<dbReference type="KEGG" id="mmu:24100"/>
<dbReference type="UCSC" id="uc009cvy.1">
    <property type="organism name" value="mouse"/>
</dbReference>
<dbReference type="AGR" id="MGI:1345190"/>
<dbReference type="CTD" id="131601"/>
<dbReference type="MGI" id="MGI:1345190">
    <property type="gene designation" value="Tpra1"/>
</dbReference>
<dbReference type="VEuPathDB" id="HostDB:ENSMUSG00000002871"/>
<dbReference type="eggNOG" id="KOG4536">
    <property type="taxonomic scope" value="Eukaryota"/>
</dbReference>
<dbReference type="GeneTree" id="ENSGT00390000016807"/>
<dbReference type="HOGENOM" id="CLU_056255_0_0_1"/>
<dbReference type="InParanoid" id="Q99MU1"/>
<dbReference type="OMA" id="DRWKSIN"/>
<dbReference type="OrthoDB" id="10027388at2759"/>
<dbReference type="PhylomeDB" id="Q99MU1"/>
<dbReference type="TreeFam" id="TF314072"/>
<dbReference type="BioGRID-ORCS" id="24100">
    <property type="hits" value="2 hits in 77 CRISPR screens"/>
</dbReference>
<dbReference type="ChiTaRS" id="Tpra1">
    <property type="organism name" value="mouse"/>
</dbReference>
<dbReference type="PRO" id="PR:Q99MU1"/>
<dbReference type="Proteomes" id="UP000000589">
    <property type="component" value="Chromosome 6"/>
</dbReference>
<dbReference type="RNAct" id="Q99MU1">
    <property type="molecule type" value="protein"/>
</dbReference>
<dbReference type="Bgee" id="ENSMUSG00000002871">
    <property type="expression patterns" value="Expressed in lip and 250 other cell types or tissues"/>
</dbReference>
<dbReference type="ExpressionAtlas" id="Q99MU1">
    <property type="expression patterns" value="baseline and differential"/>
</dbReference>
<dbReference type="GO" id="GO:0005886">
    <property type="term" value="C:plasma membrane"/>
    <property type="evidence" value="ECO:0000266"/>
    <property type="project" value="MGI"/>
</dbReference>
<dbReference type="GO" id="GO:0040016">
    <property type="term" value="P:embryonic cleavage"/>
    <property type="evidence" value="ECO:0000315"/>
    <property type="project" value="MGI"/>
</dbReference>
<dbReference type="GO" id="GO:1901991">
    <property type="term" value="P:negative regulation of mitotic cell cycle phase transition"/>
    <property type="evidence" value="ECO:0000315"/>
    <property type="project" value="MGI"/>
</dbReference>
<dbReference type="InterPro" id="IPR018781">
    <property type="entry name" value="TPRA1/CAND2/CAND8"/>
</dbReference>
<dbReference type="PANTHER" id="PTHR15876">
    <property type="entry name" value="TRANSMEMBRANE PROTEIN ADIPOCYTE-ASSOCIATED 1"/>
    <property type="match status" value="1"/>
</dbReference>
<dbReference type="PANTHER" id="PTHR15876:SF8">
    <property type="entry name" value="TRANSMEMBRANE PROTEIN ADIPOCYTE-ASSOCIATED 1"/>
    <property type="match status" value="1"/>
</dbReference>
<dbReference type="Pfam" id="PF10160">
    <property type="entry name" value="Tmemb_40"/>
    <property type="match status" value="1"/>
</dbReference>
<proteinExistence type="evidence at transcript level"/>
<organism>
    <name type="scientific">Mus musculus</name>
    <name type="common">Mouse</name>
    <dbReference type="NCBI Taxonomy" id="10090"/>
    <lineage>
        <taxon>Eukaryota</taxon>
        <taxon>Metazoa</taxon>
        <taxon>Chordata</taxon>
        <taxon>Craniata</taxon>
        <taxon>Vertebrata</taxon>
        <taxon>Euteleostomi</taxon>
        <taxon>Mammalia</taxon>
        <taxon>Eutheria</taxon>
        <taxon>Euarchontoglires</taxon>
        <taxon>Glires</taxon>
        <taxon>Rodentia</taxon>
        <taxon>Myomorpha</taxon>
        <taxon>Muroidea</taxon>
        <taxon>Muridae</taxon>
        <taxon>Murinae</taxon>
        <taxon>Mus</taxon>
        <taxon>Mus</taxon>
    </lineage>
</organism>
<keyword id="KW-0325">Glycoprotein</keyword>
<keyword id="KW-0472">Membrane</keyword>
<keyword id="KW-1185">Reference proteome</keyword>
<keyword id="KW-0812">Transmembrane</keyword>
<keyword id="KW-1133">Transmembrane helix</keyword>
<accession>Q99MU1</accession>
<accession>Q80UD9</accession>
<accession>Q8C240</accession>
<accession>Q91Z36</accession>
<accession>Q9Z112</accession>
<evidence type="ECO:0000255" key="1"/>
<evidence type="ECO:0000269" key="2">
    <source>
    </source>
</evidence>
<evidence type="ECO:0000305" key="3"/>
<protein>
    <recommendedName>
        <fullName>Transmembrane protein adipocyte-associated 1</fullName>
    </recommendedName>
    <alternativeName>
        <fullName>Integral membrane protein GPR175</fullName>
    </alternativeName>
    <alternativeName>
        <fullName>TPRA40</fullName>
    </alternativeName>
    <alternativeName>
        <fullName>Transmembrane domain protein of 40 kDa regulated in adipocytes</fullName>
    </alternativeName>
</protein>